<sequence>MPQSNAGGRSDCIGAARDSSFGPMSSSAIPATEVVIAADCWQAEASAESVVLRAIEAAATMIDADTGDAELAVMLTDDDGVRALNASYRGIDKPTNVLSFPAPQPDYQDACQDSGGAPQMLGDIAIAYQTVRREADDEGKPFAHHLSHLAVHGFLHLVGYDHETDAEAETMESTERSILAGLGIPDPYADQDRVS</sequence>
<feature type="chain" id="PRO_0000284294" description="Endoribonuclease YbeY">
    <location>
        <begin position="1"/>
        <end position="195"/>
    </location>
</feature>
<feature type="binding site" evidence="1">
    <location>
        <position position="152"/>
    </location>
    <ligand>
        <name>Zn(2+)</name>
        <dbReference type="ChEBI" id="CHEBI:29105"/>
        <note>catalytic</note>
    </ligand>
</feature>
<feature type="binding site" evidence="1">
    <location>
        <position position="156"/>
    </location>
    <ligand>
        <name>Zn(2+)</name>
        <dbReference type="ChEBI" id="CHEBI:29105"/>
        <note>catalytic</note>
    </ligand>
</feature>
<feature type="binding site" evidence="1">
    <location>
        <position position="162"/>
    </location>
    <ligand>
        <name>Zn(2+)</name>
        <dbReference type="ChEBI" id="CHEBI:29105"/>
        <note>catalytic</note>
    </ligand>
</feature>
<dbReference type="EC" id="3.1.-.-" evidence="1"/>
<dbReference type="EMBL" id="CP000283">
    <property type="protein sequence ID" value="ABE37480.1"/>
    <property type="molecule type" value="Genomic_DNA"/>
</dbReference>
<dbReference type="SMR" id="Q13EK9"/>
<dbReference type="STRING" id="316057.RPD_0240"/>
<dbReference type="KEGG" id="rpd:RPD_0240"/>
<dbReference type="eggNOG" id="COG0319">
    <property type="taxonomic scope" value="Bacteria"/>
</dbReference>
<dbReference type="HOGENOM" id="CLU_106710_0_0_5"/>
<dbReference type="Proteomes" id="UP000001818">
    <property type="component" value="Chromosome"/>
</dbReference>
<dbReference type="GO" id="GO:0005737">
    <property type="term" value="C:cytoplasm"/>
    <property type="evidence" value="ECO:0007669"/>
    <property type="project" value="UniProtKB-SubCell"/>
</dbReference>
<dbReference type="GO" id="GO:0004222">
    <property type="term" value="F:metalloendopeptidase activity"/>
    <property type="evidence" value="ECO:0007669"/>
    <property type="project" value="InterPro"/>
</dbReference>
<dbReference type="GO" id="GO:0004521">
    <property type="term" value="F:RNA endonuclease activity"/>
    <property type="evidence" value="ECO:0007669"/>
    <property type="project" value="UniProtKB-UniRule"/>
</dbReference>
<dbReference type="GO" id="GO:0008270">
    <property type="term" value="F:zinc ion binding"/>
    <property type="evidence" value="ECO:0007669"/>
    <property type="project" value="UniProtKB-UniRule"/>
</dbReference>
<dbReference type="GO" id="GO:0006364">
    <property type="term" value="P:rRNA processing"/>
    <property type="evidence" value="ECO:0007669"/>
    <property type="project" value="UniProtKB-UniRule"/>
</dbReference>
<dbReference type="Gene3D" id="3.40.390.30">
    <property type="entry name" value="Metalloproteases ('zincins'), catalytic domain"/>
    <property type="match status" value="1"/>
</dbReference>
<dbReference type="HAMAP" id="MF_00009">
    <property type="entry name" value="Endoribonucl_YbeY"/>
    <property type="match status" value="1"/>
</dbReference>
<dbReference type="InterPro" id="IPR023091">
    <property type="entry name" value="MetalPrtase_cat_dom_sf_prd"/>
</dbReference>
<dbReference type="InterPro" id="IPR002036">
    <property type="entry name" value="YbeY"/>
</dbReference>
<dbReference type="InterPro" id="IPR020549">
    <property type="entry name" value="YbeY_CS"/>
</dbReference>
<dbReference type="NCBIfam" id="TIGR00043">
    <property type="entry name" value="rRNA maturation RNase YbeY"/>
    <property type="match status" value="1"/>
</dbReference>
<dbReference type="PANTHER" id="PTHR46986">
    <property type="entry name" value="ENDORIBONUCLEASE YBEY, CHLOROPLASTIC"/>
    <property type="match status" value="1"/>
</dbReference>
<dbReference type="PANTHER" id="PTHR46986:SF1">
    <property type="entry name" value="ENDORIBONUCLEASE YBEY, CHLOROPLASTIC"/>
    <property type="match status" value="1"/>
</dbReference>
<dbReference type="Pfam" id="PF02130">
    <property type="entry name" value="YbeY"/>
    <property type="match status" value="1"/>
</dbReference>
<dbReference type="SUPFAM" id="SSF55486">
    <property type="entry name" value="Metalloproteases ('zincins'), catalytic domain"/>
    <property type="match status" value="1"/>
</dbReference>
<dbReference type="PROSITE" id="PS01306">
    <property type="entry name" value="UPF0054"/>
    <property type="match status" value="1"/>
</dbReference>
<name>YBEY_RHOPS</name>
<organism>
    <name type="scientific">Rhodopseudomonas palustris (strain BisB5)</name>
    <dbReference type="NCBI Taxonomy" id="316057"/>
    <lineage>
        <taxon>Bacteria</taxon>
        <taxon>Pseudomonadati</taxon>
        <taxon>Pseudomonadota</taxon>
        <taxon>Alphaproteobacteria</taxon>
        <taxon>Hyphomicrobiales</taxon>
        <taxon>Nitrobacteraceae</taxon>
        <taxon>Rhodopseudomonas</taxon>
    </lineage>
</organism>
<proteinExistence type="inferred from homology"/>
<evidence type="ECO:0000255" key="1">
    <source>
        <dbReference type="HAMAP-Rule" id="MF_00009"/>
    </source>
</evidence>
<gene>
    <name evidence="1" type="primary">ybeY</name>
    <name type="ordered locus">RPD_0240</name>
</gene>
<keyword id="KW-0963">Cytoplasm</keyword>
<keyword id="KW-0255">Endonuclease</keyword>
<keyword id="KW-0378">Hydrolase</keyword>
<keyword id="KW-0479">Metal-binding</keyword>
<keyword id="KW-0540">Nuclease</keyword>
<keyword id="KW-0690">Ribosome biogenesis</keyword>
<keyword id="KW-0698">rRNA processing</keyword>
<keyword id="KW-0862">Zinc</keyword>
<reference key="1">
    <citation type="submission" date="2006-03" db="EMBL/GenBank/DDBJ databases">
        <title>Complete sequence of Rhodopseudomonas palustris BisB5.</title>
        <authorList>
            <consortium name="US DOE Joint Genome Institute"/>
            <person name="Copeland A."/>
            <person name="Lucas S."/>
            <person name="Lapidus A."/>
            <person name="Barry K."/>
            <person name="Detter J.C."/>
            <person name="Glavina del Rio T."/>
            <person name="Hammon N."/>
            <person name="Israni S."/>
            <person name="Dalin E."/>
            <person name="Tice H."/>
            <person name="Pitluck S."/>
            <person name="Chain P."/>
            <person name="Malfatti S."/>
            <person name="Shin M."/>
            <person name="Vergez L."/>
            <person name="Schmutz J."/>
            <person name="Larimer F."/>
            <person name="Land M."/>
            <person name="Hauser L."/>
            <person name="Pelletier D.A."/>
            <person name="Kyrpides N."/>
            <person name="Lykidis A."/>
            <person name="Oda Y."/>
            <person name="Harwood C.S."/>
            <person name="Richardson P."/>
        </authorList>
    </citation>
    <scope>NUCLEOTIDE SEQUENCE [LARGE SCALE GENOMIC DNA]</scope>
    <source>
        <strain>BisB5</strain>
    </source>
</reference>
<protein>
    <recommendedName>
        <fullName evidence="1">Endoribonuclease YbeY</fullName>
        <ecNumber evidence="1">3.1.-.-</ecNumber>
    </recommendedName>
</protein>
<comment type="function">
    <text evidence="1">Single strand-specific metallo-endoribonuclease involved in late-stage 70S ribosome quality control and in maturation of the 3' terminus of the 16S rRNA.</text>
</comment>
<comment type="cofactor">
    <cofactor evidence="1">
        <name>Zn(2+)</name>
        <dbReference type="ChEBI" id="CHEBI:29105"/>
    </cofactor>
    <text evidence="1">Binds 1 zinc ion.</text>
</comment>
<comment type="subcellular location">
    <subcellularLocation>
        <location evidence="1">Cytoplasm</location>
    </subcellularLocation>
</comment>
<comment type="similarity">
    <text evidence="1">Belongs to the endoribonuclease YbeY family.</text>
</comment>
<accession>Q13EK9</accession>